<comment type="function">
    <text evidence="1">Involved in unsaturated fatty acids biosynthesis. Catalyzes the dehydration of short chain beta-hydroxyacyl-ACPs and long chain saturated and unsaturated beta-hydroxyacyl-ACPs.</text>
</comment>
<comment type="catalytic activity">
    <reaction evidence="1">
        <text>a (3R)-hydroxyacyl-[ACP] = a (2E)-enoyl-[ACP] + H2O</text>
        <dbReference type="Rhea" id="RHEA:13097"/>
        <dbReference type="Rhea" id="RHEA-COMP:9925"/>
        <dbReference type="Rhea" id="RHEA-COMP:9945"/>
        <dbReference type="ChEBI" id="CHEBI:15377"/>
        <dbReference type="ChEBI" id="CHEBI:78784"/>
        <dbReference type="ChEBI" id="CHEBI:78827"/>
        <dbReference type="EC" id="4.2.1.59"/>
    </reaction>
</comment>
<comment type="subcellular location">
    <subcellularLocation>
        <location evidence="1">Cytoplasm</location>
    </subcellularLocation>
</comment>
<comment type="similarity">
    <text evidence="1">Belongs to the thioester dehydratase family. FabZ subfamily.</text>
</comment>
<gene>
    <name evidence="1" type="primary">fabZ</name>
    <name type="ordered locus">GTNG_3271</name>
</gene>
<dbReference type="EC" id="4.2.1.59" evidence="1"/>
<dbReference type="EMBL" id="CP000557">
    <property type="protein sequence ID" value="ABO68610.1"/>
    <property type="molecule type" value="Genomic_DNA"/>
</dbReference>
<dbReference type="RefSeq" id="WP_011888374.1">
    <property type="nucleotide sequence ID" value="NC_009328.1"/>
</dbReference>
<dbReference type="SMR" id="A4ITF6"/>
<dbReference type="GeneID" id="87622619"/>
<dbReference type="KEGG" id="gtn:GTNG_3271"/>
<dbReference type="eggNOG" id="COG0764">
    <property type="taxonomic scope" value="Bacteria"/>
</dbReference>
<dbReference type="HOGENOM" id="CLU_078912_3_0_9"/>
<dbReference type="Proteomes" id="UP000001578">
    <property type="component" value="Chromosome"/>
</dbReference>
<dbReference type="GO" id="GO:0005737">
    <property type="term" value="C:cytoplasm"/>
    <property type="evidence" value="ECO:0007669"/>
    <property type="project" value="UniProtKB-SubCell"/>
</dbReference>
<dbReference type="GO" id="GO:0016020">
    <property type="term" value="C:membrane"/>
    <property type="evidence" value="ECO:0007669"/>
    <property type="project" value="GOC"/>
</dbReference>
<dbReference type="GO" id="GO:0019171">
    <property type="term" value="F:(3R)-hydroxyacyl-[acyl-carrier-protein] dehydratase activity"/>
    <property type="evidence" value="ECO:0007669"/>
    <property type="project" value="UniProtKB-EC"/>
</dbReference>
<dbReference type="GO" id="GO:0006633">
    <property type="term" value="P:fatty acid biosynthetic process"/>
    <property type="evidence" value="ECO:0007669"/>
    <property type="project" value="UniProtKB-UniRule"/>
</dbReference>
<dbReference type="GO" id="GO:0009245">
    <property type="term" value="P:lipid A biosynthetic process"/>
    <property type="evidence" value="ECO:0007669"/>
    <property type="project" value="UniProtKB-UniRule"/>
</dbReference>
<dbReference type="CDD" id="cd01288">
    <property type="entry name" value="FabZ"/>
    <property type="match status" value="1"/>
</dbReference>
<dbReference type="FunFam" id="3.10.129.10:FF:000001">
    <property type="entry name" value="3-hydroxyacyl-[acyl-carrier-protein] dehydratase FabZ"/>
    <property type="match status" value="1"/>
</dbReference>
<dbReference type="Gene3D" id="3.10.129.10">
    <property type="entry name" value="Hotdog Thioesterase"/>
    <property type="match status" value="1"/>
</dbReference>
<dbReference type="HAMAP" id="MF_00406">
    <property type="entry name" value="FabZ"/>
    <property type="match status" value="1"/>
</dbReference>
<dbReference type="InterPro" id="IPR013114">
    <property type="entry name" value="FabA_FabZ"/>
</dbReference>
<dbReference type="InterPro" id="IPR010084">
    <property type="entry name" value="FabZ"/>
</dbReference>
<dbReference type="InterPro" id="IPR029069">
    <property type="entry name" value="HotDog_dom_sf"/>
</dbReference>
<dbReference type="NCBIfam" id="TIGR01750">
    <property type="entry name" value="fabZ"/>
    <property type="match status" value="1"/>
</dbReference>
<dbReference type="NCBIfam" id="NF000582">
    <property type="entry name" value="PRK00006.1"/>
    <property type="match status" value="1"/>
</dbReference>
<dbReference type="PANTHER" id="PTHR30272">
    <property type="entry name" value="3-HYDROXYACYL-[ACYL-CARRIER-PROTEIN] DEHYDRATASE"/>
    <property type="match status" value="1"/>
</dbReference>
<dbReference type="PANTHER" id="PTHR30272:SF1">
    <property type="entry name" value="3-HYDROXYACYL-[ACYL-CARRIER-PROTEIN] DEHYDRATASE"/>
    <property type="match status" value="1"/>
</dbReference>
<dbReference type="Pfam" id="PF07977">
    <property type="entry name" value="FabA"/>
    <property type="match status" value="1"/>
</dbReference>
<dbReference type="SUPFAM" id="SSF54637">
    <property type="entry name" value="Thioesterase/thiol ester dehydrase-isomerase"/>
    <property type="match status" value="1"/>
</dbReference>
<accession>A4ITF6</accession>
<protein>
    <recommendedName>
        <fullName evidence="1">3-hydroxyacyl-[acyl-carrier-protein] dehydratase FabZ</fullName>
        <ecNumber evidence="1">4.2.1.59</ecNumber>
    </recommendedName>
    <alternativeName>
        <fullName evidence="1">(3R)-hydroxymyristoyl-[acyl-carrier-protein] dehydratase</fullName>
        <shortName evidence="1">(3R)-hydroxymyristoyl-ACP dehydrase</shortName>
    </alternativeName>
    <alternativeName>
        <fullName evidence="1">Beta-hydroxyacyl-ACP dehydratase</fullName>
    </alternativeName>
</protein>
<organism>
    <name type="scientific">Geobacillus thermodenitrificans (strain NG80-2)</name>
    <dbReference type="NCBI Taxonomy" id="420246"/>
    <lineage>
        <taxon>Bacteria</taxon>
        <taxon>Bacillati</taxon>
        <taxon>Bacillota</taxon>
        <taxon>Bacilli</taxon>
        <taxon>Bacillales</taxon>
        <taxon>Anoxybacillaceae</taxon>
        <taxon>Geobacillus</taxon>
    </lineage>
</organism>
<feature type="chain" id="PRO_0000301897" description="3-hydroxyacyl-[acyl-carrier-protein] dehydratase FabZ">
    <location>
        <begin position="1"/>
        <end position="145"/>
    </location>
</feature>
<feature type="active site" evidence="1">
    <location>
        <position position="48"/>
    </location>
</feature>
<sequence length="145" mass="15946">MLDIQQIQAIIPHRYPFLLVDRILEIEEGKRAVGIKNVSANESFFAGHFPEYPVMPGVLIVEALAQVGAVVLLQSEENRGRLAFFAGIDNCRFKKQVQPGDQLRLEVEILRARGSIGKGKGVATVNGELVCETELMFALGDKPAN</sequence>
<proteinExistence type="inferred from homology"/>
<name>FABZ_GEOTN</name>
<reference key="1">
    <citation type="journal article" date="2007" name="Proc. Natl. Acad. Sci. U.S.A.">
        <title>Genome and proteome of long-chain alkane degrading Geobacillus thermodenitrificans NG80-2 isolated from a deep-subsurface oil reservoir.</title>
        <authorList>
            <person name="Feng L."/>
            <person name="Wang W."/>
            <person name="Cheng J."/>
            <person name="Ren Y."/>
            <person name="Zhao G."/>
            <person name="Gao C."/>
            <person name="Tang Y."/>
            <person name="Liu X."/>
            <person name="Han W."/>
            <person name="Peng X."/>
            <person name="Liu R."/>
            <person name="Wang L."/>
        </authorList>
    </citation>
    <scope>NUCLEOTIDE SEQUENCE [LARGE SCALE GENOMIC DNA]</scope>
    <source>
        <strain>NG80-2</strain>
    </source>
</reference>
<keyword id="KW-0963">Cytoplasm</keyword>
<keyword id="KW-0441">Lipid A biosynthesis</keyword>
<keyword id="KW-0444">Lipid biosynthesis</keyword>
<keyword id="KW-0443">Lipid metabolism</keyword>
<keyword id="KW-0456">Lyase</keyword>
<evidence type="ECO:0000255" key="1">
    <source>
        <dbReference type="HAMAP-Rule" id="MF_00406"/>
    </source>
</evidence>